<reference key="1">
    <citation type="submission" date="2003-10" db="EMBL/GenBank/DDBJ databases">
        <authorList>
            <consortium name="NIH - Xenopus Gene Collection (XGC) project"/>
        </authorList>
    </citation>
    <scope>NUCLEOTIDE SEQUENCE [LARGE SCALE MRNA]</scope>
    <source>
        <tissue>Kidney</tissue>
    </source>
</reference>
<organism>
    <name type="scientific">Xenopus laevis</name>
    <name type="common">African clawed frog</name>
    <dbReference type="NCBI Taxonomy" id="8355"/>
    <lineage>
        <taxon>Eukaryota</taxon>
        <taxon>Metazoa</taxon>
        <taxon>Chordata</taxon>
        <taxon>Craniata</taxon>
        <taxon>Vertebrata</taxon>
        <taxon>Euteleostomi</taxon>
        <taxon>Amphibia</taxon>
        <taxon>Batrachia</taxon>
        <taxon>Anura</taxon>
        <taxon>Pipoidea</taxon>
        <taxon>Pipidae</taxon>
        <taxon>Xenopodinae</taxon>
        <taxon>Xenopus</taxon>
        <taxon>Xenopus</taxon>
    </lineage>
</organism>
<evidence type="ECO:0000250" key="1">
    <source>
        <dbReference type="UniProtKB" id="O35405"/>
    </source>
</evidence>
<evidence type="ECO:0000250" key="2">
    <source>
        <dbReference type="UniProtKB" id="Q8BG07"/>
    </source>
</evidence>
<evidence type="ECO:0000250" key="3">
    <source>
        <dbReference type="UniProtKB" id="Q8IV08"/>
    </source>
</evidence>
<evidence type="ECO:0000255" key="4"/>
<evidence type="ECO:0000255" key="5">
    <source>
        <dbReference type="PROSITE-ProRule" id="PRU00153"/>
    </source>
</evidence>
<evidence type="ECO:0000305" key="6"/>
<gene>
    <name type="primary">pld3</name>
</gene>
<keyword id="KW-0256">Endoplasmic reticulum</keyword>
<keyword id="KW-0967">Endosome</keyword>
<keyword id="KW-0269">Exonuclease</keyword>
<keyword id="KW-0325">Glycoprotein</keyword>
<keyword id="KW-0333">Golgi apparatus</keyword>
<keyword id="KW-0378">Hydrolase</keyword>
<keyword id="KW-0391">Immunity</keyword>
<keyword id="KW-0395">Inflammatory response</keyword>
<keyword id="KW-0458">Lysosome</keyword>
<keyword id="KW-0472">Membrane</keyword>
<keyword id="KW-0540">Nuclease</keyword>
<keyword id="KW-1185">Reference proteome</keyword>
<keyword id="KW-0677">Repeat</keyword>
<keyword id="KW-0735">Signal-anchor</keyword>
<keyword id="KW-0812">Transmembrane</keyword>
<keyword id="KW-1133">Transmembrane helix</keyword>
<keyword id="KW-0832">Ubl conjugation</keyword>
<proteinExistence type="evidence at transcript level"/>
<sequence>MSSKVEYKPIQPHEEAENHFLQHELHKVKARKYYRCALVVAIIITLVFCILASQLLLFPFLSITSQTTETVLNKDIRCDDQCRFVLVESIPEGLVYDANSTINPSIFQSWMNIITNAKSSIDIASFYWSLTNEDTQTKEPSAHQGELILQELLNLKQRGVSLRVAVNPPDSPIRSKDISALKDRGADVRVVDMPKLTDGILHTKFWVVDNEHFYIGSANMDWRSLTQVKELGATIYNCSCLAQDLKKIFEAYWILGLPNATLPSPWPANYSTPYNKDTPMQVMLNSTASQVYLSSSPPPLSATGRTDDLQSIMNIIDDAKKFVYISVMDYSPTEEFSHPRRYWPEIDNHLRKAVYERNVNVRLLISCWKNSRPSMFTFLRSLAALHSNTSHYNIEVKIFVVPATEAQKKIPYARVNHNKYMVTDRVAYIGTSNWSGDYFINTAGSALVVNQTQSAGTSDTIQMQLQTVFERDWNSNYSLTFNTLSSWKEKCIF</sequence>
<protein>
    <recommendedName>
        <fullName>5'-3' exonuclease PLD3</fullName>
        <ecNumber evidence="3">3.1.16.1</ecNumber>
    </recommendedName>
    <alternativeName>
        <fullName>Choline phosphatase 3</fullName>
    </alternativeName>
    <alternativeName>
        <fullName>Phosphatidylcholine-hydrolyzing phospholipase D3</fullName>
    </alternativeName>
    <alternativeName>
        <fullName>Phospholipase D3</fullName>
        <shortName>PLD 3</shortName>
    </alternativeName>
</protein>
<comment type="function">
    <text evidence="1 3">5'-&gt;3' DNA exonuclease which digests single-stranded DNA (ssDNA) (By similarity). Regulates inflammatory cytokine responses via the degradation of nucleic acids, by reducing the concentration of ssDNA able to stimulate TLR9, a nucleotide-sensing receptor in collaboration with PLD4 (By similarity). May be important in myotube formation. Plays a role in lysosomal homeostasis. Involved in the regulation of endosomal protein sorting (By similarity).</text>
</comment>
<comment type="catalytic activity">
    <reaction evidence="3">
        <text>Exonucleolytic cleavage in the 5'- to 3'-direction to yield nucleoside 3'-phosphates.</text>
        <dbReference type="EC" id="3.1.16.1"/>
    </reaction>
</comment>
<comment type="subcellular location">
    <subcellularLocation>
        <location evidence="3">Endoplasmic reticulum membrane</location>
        <topology evidence="3">Single-pass type II membrane protein</topology>
    </subcellularLocation>
    <subcellularLocation>
        <location evidence="3">Lysosome lumen</location>
    </subcellularLocation>
    <subcellularLocation>
        <location evidence="3">Early endosome membrane</location>
        <topology evidence="3">Single-pass type II membrane protein</topology>
    </subcellularLocation>
    <subcellularLocation>
        <location evidence="3">Late endosome membrane</location>
        <topology evidence="3">Single-pass type II membrane protein</topology>
    </subcellularLocation>
    <subcellularLocation>
        <location evidence="3">Golgi apparatus membrane</location>
        <topology evidence="3">Single-pass type II membrane protein</topology>
    </subcellularLocation>
    <subcellularLocation>
        <location evidence="3">Endosome membrane</location>
        <topology evidence="3">Single-pass type II membrane protein</topology>
    </subcellularLocation>
    <text evidence="3">Localizes to ER-associated vesicles in differentiating myotubes. The soluble form in lysosome arises by proteolytic processing of the membrane-bound form.</text>
</comment>
<comment type="PTM">
    <text evidence="3">N-glycosylated.</text>
</comment>
<comment type="PTM">
    <text evidence="3">Proteolytically processed to a soluble form that is stable within endosomes and lysosomes. During transport through the secretory pathway becomes proteolysed by cysteine proteases, thereby releasing a stable soluble lysosomal lumenal polypeptide, whereas the transmembrane-bound fragment is rapidly degraded. Its transport route to lysosomes involves ubiquitination and the ESCRT complex.</text>
</comment>
<comment type="PTM">
    <text evidence="3">Ubiquitinated. Ubiquitination mediates sorting into lysosomes.</text>
</comment>
<comment type="similarity">
    <text evidence="6">Belongs to the phospholipase D family.</text>
</comment>
<comment type="caution">
    <text evidence="1 2">It was initially thought that PDL3 has phospholipase D activity due to its HKD motifs. The second HKD motif contains Glu instead of the canonical Asp. Its enzyme activity is therefore unsure. Catalytic phospholipase D activity is still controversial (By similarity). Its closest homolog PLD4, exhibits no phospholipase activity (By similarity).</text>
</comment>
<accession>Q6PB03</accession>
<name>PLD3_XENLA</name>
<feature type="chain" id="PRO_0000280331" description="5'-3' exonuclease PLD3">
    <location>
        <begin position="1"/>
        <end position="493"/>
    </location>
</feature>
<feature type="topological domain" description="Cytoplasmic" evidence="3">
    <location>
        <begin position="1"/>
        <end position="37"/>
    </location>
</feature>
<feature type="transmembrane region" description="Helical; Signal-anchor for type II membrane protein" evidence="3">
    <location>
        <begin position="38"/>
        <end position="58"/>
    </location>
</feature>
<feature type="topological domain" description="Lumenal" evidence="3">
    <location>
        <begin position="59"/>
        <end position="493"/>
    </location>
</feature>
<feature type="domain" description="PLD phosphodiesterase 1" evidence="5">
    <location>
        <begin position="197"/>
        <end position="224"/>
    </location>
</feature>
<feature type="domain" description="PLD phosphodiesterase 2" evidence="5">
    <location>
        <begin position="412"/>
        <end position="438"/>
    </location>
</feature>
<feature type="active site" evidence="5">
    <location>
        <position position="202"/>
    </location>
</feature>
<feature type="active site" evidence="5">
    <location>
        <position position="204"/>
    </location>
</feature>
<feature type="active site" evidence="5">
    <location>
        <position position="209"/>
    </location>
</feature>
<feature type="active site" evidence="5">
    <location>
        <position position="417"/>
    </location>
</feature>
<feature type="active site" evidence="5">
    <location>
        <position position="419"/>
    </location>
</feature>
<feature type="active site" evidence="5">
    <location>
        <position position="424"/>
    </location>
</feature>
<feature type="glycosylation site" description="N-linked (GlcNAc...) asparagine" evidence="4">
    <location>
        <position position="99"/>
    </location>
</feature>
<feature type="glycosylation site" description="N-linked (GlcNAc...) asparagine" evidence="4">
    <location>
        <position position="237"/>
    </location>
</feature>
<feature type="glycosylation site" description="N-linked (GlcNAc...) asparagine" evidence="4">
    <location>
        <position position="259"/>
    </location>
</feature>
<feature type="glycosylation site" description="N-linked (GlcNAc...) asparagine" evidence="4">
    <location>
        <position position="269"/>
    </location>
</feature>
<feature type="glycosylation site" description="N-linked (GlcNAc...) asparagine" evidence="4">
    <location>
        <position position="285"/>
    </location>
</feature>
<feature type="glycosylation site" description="N-linked (GlcNAc...) asparagine" evidence="4">
    <location>
        <position position="388"/>
    </location>
</feature>
<feature type="glycosylation site" description="N-linked (GlcNAc...) asparagine" evidence="4">
    <location>
        <position position="433"/>
    </location>
</feature>
<feature type="glycosylation site" description="N-linked (GlcNAc...) asparagine" evidence="4">
    <location>
        <position position="450"/>
    </location>
</feature>
<feature type="glycosylation site" description="N-linked (GlcNAc...) asparagine" evidence="4">
    <location>
        <position position="476"/>
    </location>
</feature>
<dbReference type="EC" id="3.1.16.1" evidence="3"/>
<dbReference type="EMBL" id="BC059981">
    <property type="protein sequence ID" value="AAH59981.1"/>
    <property type="molecule type" value="mRNA"/>
</dbReference>
<dbReference type="RefSeq" id="NP_001083260.1">
    <property type="nucleotide sequence ID" value="NM_001089791.1"/>
</dbReference>
<dbReference type="SMR" id="Q6PB03"/>
<dbReference type="GlyCosmos" id="Q6PB03">
    <property type="glycosylation" value="9 sites, No reported glycans"/>
</dbReference>
<dbReference type="DNASU" id="398831"/>
<dbReference type="GeneID" id="398831"/>
<dbReference type="KEGG" id="xla:398831"/>
<dbReference type="AGR" id="Xenbase:XB-GENE-1006830"/>
<dbReference type="CTD" id="398831"/>
<dbReference type="Xenbase" id="XB-GENE-1006830">
    <property type="gene designation" value="pld3.L"/>
</dbReference>
<dbReference type="OrthoDB" id="1923775at2759"/>
<dbReference type="Proteomes" id="UP000186698">
    <property type="component" value="Chromosome 8L"/>
</dbReference>
<dbReference type="Bgee" id="398831">
    <property type="expression patterns" value="Expressed in egg cell and 19 other cell types or tissues"/>
</dbReference>
<dbReference type="GO" id="GO:0031901">
    <property type="term" value="C:early endosome membrane"/>
    <property type="evidence" value="ECO:0000250"/>
    <property type="project" value="UniProtKB"/>
</dbReference>
<dbReference type="GO" id="GO:0005789">
    <property type="term" value="C:endoplasmic reticulum membrane"/>
    <property type="evidence" value="ECO:0000250"/>
    <property type="project" value="UniProtKB"/>
</dbReference>
<dbReference type="GO" id="GO:0000139">
    <property type="term" value="C:Golgi membrane"/>
    <property type="evidence" value="ECO:0000250"/>
    <property type="project" value="UniProtKB"/>
</dbReference>
<dbReference type="GO" id="GO:0031902">
    <property type="term" value="C:late endosome membrane"/>
    <property type="evidence" value="ECO:0000250"/>
    <property type="project" value="UniProtKB"/>
</dbReference>
<dbReference type="GO" id="GO:0043202">
    <property type="term" value="C:lysosomal lumen"/>
    <property type="evidence" value="ECO:0000250"/>
    <property type="project" value="UniProtKB"/>
</dbReference>
<dbReference type="GO" id="GO:0045145">
    <property type="term" value="F:single-stranded DNA 5'-3' DNA exonuclease activity"/>
    <property type="evidence" value="ECO:0000250"/>
    <property type="project" value="UniProtKB"/>
</dbReference>
<dbReference type="GO" id="GO:0002376">
    <property type="term" value="P:immune system process"/>
    <property type="evidence" value="ECO:0007669"/>
    <property type="project" value="UniProtKB-KW"/>
</dbReference>
<dbReference type="GO" id="GO:0006954">
    <property type="term" value="P:inflammatory response"/>
    <property type="evidence" value="ECO:0007669"/>
    <property type="project" value="UniProtKB-KW"/>
</dbReference>
<dbReference type="GO" id="GO:0014902">
    <property type="term" value="P:myotube differentiation"/>
    <property type="evidence" value="ECO:0000250"/>
    <property type="project" value="UniProtKB"/>
</dbReference>
<dbReference type="GO" id="GO:1900015">
    <property type="term" value="P:regulation of cytokine production involved in inflammatory response"/>
    <property type="evidence" value="ECO:0000250"/>
    <property type="project" value="UniProtKB"/>
</dbReference>
<dbReference type="CDD" id="cd09144">
    <property type="entry name" value="PLDc_vPLD3_1"/>
    <property type="match status" value="1"/>
</dbReference>
<dbReference type="CDD" id="cd09147">
    <property type="entry name" value="PLDc_vPLD3_2"/>
    <property type="match status" value="1"/>
</dbReference>
<dbReference type="Gene3D" id="3.30.870.10">
    <property type="entry name" value="Endonuclease Chain A"/>
    <property type="match status" value="2"/>
</dbReference>
<dbReference type="InterPro" id="IPR050874">
    <property type="entry name" value="Diverse_PLD-related"/>
</dbReference>
<dbReference type="InterPro" id="IPR032803">
    <property type="entry name" value="PLDc_3"/>
</dbReference>
<dbReference type="InterPro" id="IPR001736">
    <property type="entry name" value="PLipase_D/transphosphatidylase"/>
</dbReference>
<dbReference type="PANTHER" id="PTHR10185:SF16">
    <property type="entry name" value="5'-3' EXONUCLEASE PLD3"/>
    <property type="match status" value="1"/>
</dbReference>
<dbReference type="PANTHER" id="PTHR10185">
    <property type="entry name" value="PHOSPHOLIPASE D - RELATED"/>
    <property type="match status" value="1"/>
</dbReference>
<dbReference type="Pfam" id="PF13918">
    <property type="entry name" value="PLDc_3"/>
    <property type="match status" value="1"/>
</dbReference>
<dbReference type="SMART" id="SM00155">
    <property type="entry name" value="PLDc"/>
    <property type="match status" value="2"/>
</dbReference>
<dbReference type="SUPFAM" id="SSF56024">
    <property type="entry name" value="Phospholipase D/nuclease"/>
    <property type="match status" value="2"/>
</dbReference>
<dbReference type="PROSITE" id="PS50035">
    <property type="entry name" value="PLD"/>
    <property type="match status" value="2"/>
</dbReference>